<comment type="function">
    <text evidence="1">Joins adenosylcobinamide-GDP and alpha-ribazole to generate adenosylcobalamin (Ado-cobalamin). Also synthesizes adenosylcobalamin 5'-phosphate from adenosylcobinamide-GDP and alpha-ribazole 5'-phosphate.</text>
</comment>
<comment type="catalytic activity">
    <reaction evidence="1">
        <text>alpha-ribazole + adenosylcob(III)inamide-GDP = adenosylcob(III)alamin + GMP + H(+)</text>
        <dbReference type="Rhea" id="RHEA:16049"/>
        <dbReference type="ChEBI" id="CHEBI:10329"/>
        <dbReference type="ChEBI" id="CHEBI:15378"/>
        <dbReference type="ChEBI" id="CHEBI:18408"/>
        <dbReference type="ChEBI" id="CHEBI:58115"/>
        <dbReference type="ChEBI" id="CHEBI:60487"/>
        <dbReference type="EC" id="2.7.8.26"/>
    </reaction>
</comment>
<comment type="catalytic activity">
    <reaction evidence="1">
        <text>alpha-ribazole 5'-phosphate + adenosylcob(III)inamide-GDP = adenosylcob(III)alamin 5'-phosphate + GMP + H(+)</text>
        <dbReference type="Rhea" id="RHEA:23560"/>
        <dbReference type="ChEBI" id="CHEBI:15378"/>
        <dbReference type="ChEBI" id="CHEBI:57918"/>
        <dbReference type="ChEBI" id="CHEBI:58115"/>
        <dbReference type="ChEBI" id="CHEBI:60487"/>
        <dbReference type="ChEBI" id="CHEBI:60493"/>
        <dbReference type="EC" id="2.7.8.26"/>
    </reaction>
</comment>
<comment type="cofactor">
    <cofactor evidence="1">
        <name>Mg(2+)</name>
        <dbReference type="ChEBI" id="CHEBI:18420"/>
    </cofactor>
</comment>
<comment type="pathway">
    <text evidence="1">Cofactor biosynthesis; adenosylcobalamin biosynthesis; adenosylcobalamin from cob(II)yrinate a,c-diamide: step 7/7.</text>
</comment>
<comment type="subcellular location">
    <subcellularLocation>
        <location evidence="1">Cell membrane</location>
        <topology evidence="1">Multi-pass membrane protein</topology>
    </subcellularLocation>
</comment>
<comment type="similarity">
    <text evidence="1">Belongs to the CobS family.</text>
</comment>
<sequence length="250" mass="27541">MNIDMNRFISILQFLTRIPIKRDVPMEEAFHKGIIYFPVVGGIIGALLMVAYRGASLYLAHSLSALLTVGFFVFLTGGLHLDGLGDTFDGLYSNRNKETILEIMKDSRLGTNGVLAMVFILLLKLYGIQGLGEHQIYWGIILMPVMGRQAIVYGCYRTIYGRSQGLGHLFIGKVSKKELLISSLLTFILAAMHLPSLIFALLLPIGSQLYKGHVMKKIDGMTGDTLGSLCELTEGCYLLFILLITGAGLF</sequence>
<protein>
    <recommendedName>
        <fullName evidence="1">Adenosylcobinamide-GDP ribazoletransferase</fullName>
        <ecNumber evidence="1">2.7.8.26</ecNumber>
    </recommendedName>
    <alternativeName>
        <fullName evidence="1">Cobalamin synthase</fullName>
    </alternativeName>
    <alternativeName>
        <fullName evidence="1">Cobalamin-5'-phosphate synthase</fullName>
    </alternativeName>
</protein>
<keyword id="KW-1003">Cell membrane</keyword>
<keyword id="KW-0169">Cobalamin biosynthesis</keyword>
<keyword id="KW-0460">Magnesium</keyword>
<keyword id="KW-0472">Membrane</keyword>
<keyword id="KW-1185">Reference proteome</keyword>
<keyword id="KW-0808">Transferase</keyword>
<keyword id="KW-0812">Transmembrane</keyword>
<keyword id="KW-1133">Transmembrane helix</keyword>
<gene>
    <name evidence="1" type="primary">cobS</name>
    <name type="ordered locus">Amet_3621</name>
</gene>
<feature type="chain" id="PRO_1000132558" description="Adenosylcobinamide-GDP ribazoletransferase">
    <location>
        <begin position="1"/>
        <end position="250"/>
    </location>
</feature>
<feature type="transmembrane region" description="Helical" evidence="1">
    <location>
        <begin position="32"/>
        <end position="52"/>
    </location>
</feature>
<feature type="transmembrane region" description="Helical" evidence="1">
    <location>
        <begin position="59"/>
        <end position="79"/>
    </location>
</feature>
<feature type="transmembrane region" description="Helical" evidence="1">
    <location>
        <begin position="113"/>
        <end position="133"/>
    </location>
</feature>
<feature type="transmembrane region" description="Helical" evidence="1">
    <location>
        <begin position="136"/>
        <end position="156"/>
    </location>
</feature>
<feature type="transmembrane region" description="Helical" evidence="1">
    <location>
        <begin position="185"/>
        <end position="205"/>
    </location>
</feature>
<feature type="transmembrane region" description="Helical" evidence="1">
    <location>
        <begin position="230"/>
        <end position="250"/>
    </location>
</feature>
<dbReference type="EC" id="2.7.8.26" evidence="1"/>
<dbReference type="EMBL" id="CP000724">
    <property type="protein sequence ID" value="ABR49743.1"/>
    <property type="molecule type" value="Genomic_DNA"/>
</dbReference>
<dbReference type="STRING" id="293826.Amet_3621"/>
<dbReference type="KEGG" id="amt:Amet_3621"/>
<dbReference type="eggNOG" id="COG0368">
    <property type="taxonomic scope" value="Bacteria"/>
</dbReference>
<dbReference type="HOGENOM" id="CLU_057426_3_1_9"/>
<dbReference type="UniPathway" id="UPA00148">
    <property type="reaction ID" value="UER00238"/>
</dbReference>
<dbReference type="Proteomes" id="UP000001572">
    <property type="component" value="Chromosome"/>
</dbReference>
<dbReference type="GO" id="GO:0005886">
    <property type="term" value="C:plasma membrane"/>
    <property type="evidence" value="ECO:0007669"/>
    <property type="project" value="UniProtKB-SubCell"/>
</dbReference>
<dbReference type="GO" id="GO:0051073">
    <property type="term" value="F:adenosylcobinamide-GDP ribazoletransferase activity"/>
    <property type="evidence" value="ECO:0007669"/>
    <property type="project" value="UniProtKB-UniRule"/>
</dbReference>
<dbReference type="GO" id="GO:0008818">
    <property type="term" value="F:cobalamin 5'-phosphate synthase activity"/>
    <property type="evidence" value="ECO:0007669"/>
    <property type="project" value="UniProtKB-UniRule"/>
</dbReference>
<dbReference type="GO" id="GO:0009236">
    <property type="term" value="P:cobalamin biosynthetic process"/>
    <property type="evidence" value="ECO:0007669"/>
    <property type="project" value="UniProtKB-UniRule"/>
</dbReference>
<dbReference type="HAMAP" id="MF_00719">
    <property type="entry name" value="CobS"/>
    <property type="match status" value="1"/>
</dbReference>
<dbReference type="InterPro" id="IPR003805">
    <property type="entry name" value="CobS"/>
</dbReference>
<dbReference type="NCBIfam" id="TIGR00317">
    <property type="entry name" value="cobS"/>
    <property type="match status" value="1"/>
</dbReference>
<dbReference type="PANTHER" id="PTHR34148">
    <property type="entry name" value="ADENOSYLCOBINAMIDE-GDP RIBAZOLETRANSFERASE"/>
    <property type="match status" value="1"/>
</dbReference>
<dbReference type="PANTHER" id="PTHR34148:SF1">
    <property type="entry name" value="ADENOSYLCOBINAMIDE-GDP RIBAZOLETRANSFERASE"/>
    <property type="match status" value="1"/>
</dbReference>
<dbReference type="Pfam" id="PF02654">
    <property type="entry name" value="CobS"/>
    <property type="match status" value="1"/>
</dbReference>
<name>COBS_ALKMQ</name>
<reference key="1">
    <citation type="journal article" date="2016" name="Genome Announc.">
        <title>Complete genome sequence of Alkaliphilus metalliredigens strain QYMF, an alkaliphilic and metal-reducing bacterium isolated from borax-contaminated leachate ponds.</title>
        <authorList>
            <person name="Hwang C."/>
            <person name="Copeland A."/>
            <person name="Lucas S."/>
            <person name="Lapidus A."/>
            <person name="Barry K."/>
            <person name="Detter J.C."/>
            <person name="Glavina Del Rio T."/>
            <person name="Hammon N."/>
            <person name="Israni S."/>
            <person name="Dalin E."/>
            <person name="Tice H."/>
            <person name="Pitluck S."/>
            <person name="Chertkov O."/>
            <person name="Brettin T."/>
            <person name="Bruce D."/>
            <person name="Han C."/>
            <person name="Schmutz J."/>
            <person name="Larimer F."/>
            <person name="Land M.L."/>
            <person name="Hauser L."/>
            <person name="Kyrpides N."/>
            <person name="Mikhailova N."/>
            <person name="Ye Q."/>
            <person name="Zhou J."/>
            <person name="Richardson P."/>
            <person name="Fields M.W."/>
        </authorList>
    </citation>
    <scope>NUCLEOTIDE SEQUENCE [LARGE SCALE GENOMIC DNA]</scope>
    <source>
        <strain>QYMF</strain>
    </source>
</reference>
<organism>
    <name type="scientific">Alkaliphilus metalliredigens (strain QYMF)</name>
    <dbReference type="NCBI Taxonomy" id="293826"/>
    <lineage>
        <taxon>Bacteria</taxon>
        <taxon>Bacillati</taxon>
        <taxon>Bacillota</taxon>
        <taxon>Clostridia</taxon>
        <taxon>Peptostreptococcales</taxon>
        <taxon>Natronincolaceae</taxon>
        <taxon>Alkaliphilus</taxon>
    </lineage>
</organism>
<accession>A6TU75</accession>
<proteinExistence type="inferred from homology"/>
<evidence type="ECO:0000255" key="1">
    <source>
        <dbReference type="HAMAP-Rule" id="MF_00719"/>
    </source>
</evidence>